<organism>
    <name type="scientific">Homo sapiens</name>
    <name type="common">Human</name>
    <dbReference type="NCBI Taxonomy" id="9606"/>
    <lineage>
        <taxon>Eukaryota</taxon>
        <taxon>Metazoa</taxon>
        <taxon>Chordata</taxon>
        <taxon>Craniata</taxon>
        <taxon>Vertebrata</taxon>
        <taxon>Euteleostomi</taxon>
        <taxon>Mammalia</taxon>
        <taxon>Eutheria</taxon>
        <taxon>Euarchontoglires</taxon>
        <taxon>Primates</taxon>
        <taxon>Haplorrhini</taxon>
        <taxon>Catarrhini</taxon>
        <taxon>Hominidae</taxon>
        <taxon>Homo</taxon>
    </lineage>
</organism>
<feature type="signal peptide" evidence="2">
    <location>
        <begin position="1"/>
        <end position="16"/>
    </location>
</feature>
<feature type="chain" id="PRO_0000331620" description="Mucin-12">
    <location>
        <begin position="17"/>
        <end position="5478"/>
    </location>
</feature>
<feature type="topological domain" description="Extracellular" evidence="2">
    <location>
        <begin position="17"/>
        <end position="5380"/>
    </location>
</feature>
<feature type="transmembrane region" description="Helical" evidence="2">
    <location>
        <begin position="5381"/>
        <end position="5401"/>
    </location>
</feature>
<feature type="topological domain" description="Cytoplasmic" evidence="2">
    <location>
        <begin position="5402"/>
        <end position="5478"/>
    </location>
</feature>
<feature type="repeat" description="1">
    <location>
        <begin position="222"/>
        <end position="240"/>
    </location>
</feature>
<feature type="repeat" description="2">
    <location>
        <begin position="471"/>
        <end position="489"/>
    </location>
</feature>
<feature type="repeat" description="3">
    <location>
        <begin position="499"/>
        <end position="517"/>
    </location>
</feature>
<feature type="repeat" description="4">
    <location>
        <begin position="662"/>
        <end position="680"/>
    </location>
</feature>
<feature type="repeat" description="5">
    <location>
        <begin position="827"/>
        <end position="845"/>
    </location>
</feature>
<feature type="repeat" description="6">
    <location>
        <begin position="1159"/>
        <end position="1177"/>
    </location>
</feature>
<feature type="repeat" description="7">
    <location>
        <begin position="1466"/>
        <end position="1484"/>
    </location>
</feature>
<feature type="repeat" description="8">
    <location>
        <begin position="1633"/>
        <end position="1651"/>
    </location>
</feature>
<feature type="repeat" description="9">
    <location>
        <begin position="1717"/>
        <end position="1735"/>
    </location>
</feature>
<feature type="repeat" description="10">
    <location>
        <begin position="1882"/>
        <end position="1900"/>
    </location>
</feature>
<feature type="repeat" description="11">
    <location>
        <begin position="1910"/>
        <end position="1928"/>
    </location>
</feature>
<feature type="repeat" description="12">
    <location>
        <begin position="2075"/>
        <end position="2093"/>
    </location>
</feature>
<feature type="repeat" description="13">
    <location>
        <begin position="2242"/>
        <end position="2260"/>
    </location>
</feature>
<feature type="repeat" description="14">
    <location>
        <begin position="2549"/>
        <end position="2567"/>
    </location>
</feature>
<feature type="repeat" description="15">
    <location>
        <begin position="2716"/>
        <end position="2734"/>
    </location>
</feature>
<feature type="repeat" description="16">
    <location>
        <begin position="3023"/>
        <end position="3041"/>
    </location>
</feature>
<feature type="repeat" description="17">
    <location>
        <begin position="3190"/>
        <end position="3208"/>
    </location>
</feature>
<feature type="repeat" description="18">
    <location>
        <begin position="3274"/>
        <end position="3292"/>
    </location>
</feature>
<feature type="repeat" description="19">
    <location>
        <begin position="3439"/>
        <end position="3457"/>
    </location>
</feature>
<feature type="repeat" description="20">
    <location>
        <begin position="3467"/>
        <end position="3485"/>
    </location>
</feature>
<feature type="repeat" description="21">
    <location>
        <begin position="3632"/>
        <end position="3650"/>
    </location>
</feature>
<feature type="repeat" description="22">
    <location>
        <begin position="3799"/>
        <end position="3817"/>
    </location>
</feature>
<feature type="repeat" description="23">
    <location>
        <begin position="4106"/>
        <end position="4124"/>
    </location>
</feature>
<feature type="repeat" description="24">
    <location>
        <begin position="4273"/>
        <end position="4291"/>
    </location>
</feature>
<feature type="repeat" description="25">
    <location>
        <begin position="4522"/>
        <end position="4540"/>
    </location>
</feature>
<feature type="repeat" description="26">
    <location>
        <begin position="4550"/>
        <end position="4568"/>
    </location>
</feature>
<feature type="repeat" description="27">
    <location>
        <begin position="4715"/>
        <end position="4733"/>
    </location>
</feature>
<feature type="repeat" description="28">
    <location>
        <begin position="4743"/>
        <end position="4761"/>
    </location>
</feature>
<feature type="domain" description="EGF-like">
    <location>
        <begin position="5116"/>
        <end position="5154"/>
    </location>
</feature>
<feature type="domain" description="SEA" evidence="3">
    <location>
        <begin position="5168"/>
        <end position="5275"/>
    </location>
</feature>
<feature type="region of interest" description="Disordered" evidence="4">
    <location>
        <begin position="212"/>
        <end position="737"/>
    </location>
</feature>
<feature type="region of interest" description="28 X 19 AA approximate tandem repeats of E-E-S-X-X-X-H-X-X-P-X-X-T-X-T-X-X-X-P">
    <location>
        <begin position="222"/>
        <end position="4761"/>
    </location>
</feature>
<feature type="region of interest" description="Disordered" evidence="4">
    <location>
        <begin position="749"/>
        <end position="4847"/>
    </location>
</feature>
<feature type="region of interest" description="Disordered" evidence="4">
    <location>
        <begin position="4887"/>
        <end position="5034"/>
    </location>
</feature>
<feature type="region of interest" description="Disordered" evidence="4">
    <location>
        <begin position="5048"/>
        <end position="5071"/>
    </location>
</feature>
<feature type="region of interest" description="Disordered" evidence="4">
    <location>
        <begin position="5093"/>
        <end position="5112"/>
    </location>
</feature>
<feature type="short sequence motif" description="Cleavage motif" evidence="1">
    <location>
        <begin position="5226"/>
        <end position="5233"/>
    </location>
</feature>
<feature type="compositionally biased region" description="Polar residues" evidence="4">
    <location>
        <begin position="226"/>
        <end position="246"/>
    </location>
</feature>
<feature type="compositionally biased region" description="Polar residues" evidence="4">
    <location>
        <begin position="255"/>
        <end position="288"/>
    </location>
</feature>
<feature type="compositionally biased region" description="Polar residues" evidence="4">
    <location>
        <begin position="296"/>
        <end position="313"/>
    </location>
</feature>
<feature type="compositionally biased region" description="Polar residues" evidence="4">
    <location>
        <begin position="325"/>
        <end position="342"/>
    </location>
</feature>
<feature type="compositionally biased region" description="Low complexity" evidence="4">
    <location>
        <begin position="343"/>
        <end position="366"/>
    </location>
</feature>
<feature type="compositionally biased region" description="Polar residues" evidence="4">
    <location>
        <begin position="367"/>
        <end position="387"/>
    </location>
</feature>
<feature type="compositionally biased region" description="Low complexity" evidence="4">
    <location>
        <begin position="396"/>
        <end position="413"/>
    </location>
</feature>
<feature type="compositionally biased region" description="Polar residues" evidence="4">
    <location>
        <begin position="419"/>
        <end position="440"/>
    </location>
</feature>
<feature type="compositionally biased region" description="Low complexity" evidence="4">
    <location>
        <begin position="445"/>
        <end position="466"/>
    </location>
</feature>
<feature type="compositionally biased region" description="Low complexity" evidence="4">
    <location>
        <begin position="478"/>
        <end position="495"/>
    </location>
</feature>
<feature type="compositionally biased region" description="Low complexity" evidence="4">
    <location>
        <begin position="531"/>
        <end position="554"/>
    </location>
</feature>
<feature type="compositionally biased region" description="Polar residues" evidence="4">
    <location>
        <begin position="555"/>
        <end position="575"/>
    </location>
</feature>
<feature type="compositionally biased region" description="Polar residues" evidence="4">
    <location>
        <begin position="608"/>
        <end position="648"/>
    </location>
</feature>
<feature type="compositionally biased region" description="Low complexity" evidence="4">
    <location>
        <begin position="654"/>
        <end position="669"/>
    </location>
</feature>
<feature type="compositionally biased region" description="Polar residues" evidence="4">
    <location>
        <begin position="670"/>
        <end position="715"/>
    </location>
</feature>
<feature type="compositionally biased region" description="Polar residues" evidence="4">
    <location>
        <begin position="722"/>
        <end position="737"/>
    </location>
</feature>
<feature type="compositionally biased region" description="Polar residues" evidence="4">
    <location>
        <begin position="751"/>
        <end position="783"/>
    </location>
</feature>
<feature type="compositionally biased region" description="Polar residues" evidence="4">
    <location>
        <begin position="792"/>
        <end position="842"/>
    </location>
</feature>
<feature type="compositionally biased region" description="Low complexity" evidence="4">
    <location>
        <begin position="859"/>
        <end position="877"/>
    </location>
</feature>
<feature type="compositionally biased region" description="Polar residues" evidence="4">
    <location>
        <begin position="884"/>
        <end position="899"/>
    </location>
</feature>
<feature type="compositionally biased region" description="Polar residues" evidence="4">
    <location>
        <begin position="928"/>
        <end position="970"/>
    </location>
</feature>
<feature type="compositionally biased region" description="Low complexity" evidence="4">
    <location>
        <begin position="971"/>
        <end position="1007"/>
    </location>
</feature>
<feature type="compositionally biased region" description="Polar residues" evidence="4">
    <location>
        <begin position="1009"/>
        <end position="1021"/>
    </location>
</feature>
<feature type="compositionally biased region" description="Low complexity" evidence="4">
    <location>
        <begin position="1022"/>
        <end position="1065"/>
    </location>
</feature>
<feature type="compositionally biased region" description="Polar residues" evidence="4">
    <location>
        <begin position="1066"/>
        <end position="1101"/>
    </location>
</feature>
<feature type="compositionally biased region" description="Polar residues" evidence="4">
    <location>
        <begin position="1108"/>
        <end position="1138"/>
    </location>
</feature>
<feature type="compositionally biased region" description="Low complexity" evidence="4">
    <location>
        <begin position="1139"/>
        <end position="1157"/>
    </location>
</feature>
<feature type="compositionally biased region" description="Polar residues" evidence="4">
    <location>
        <begin position="1160"/>
        <end position="1184"/>
    </location>
</feature>
<feature type="compositionally biased region" description="Polar residues" evidence="4">
    <location>
        <begin position="1191"/>
        <end position="1207"/>
    </location>
</feature>
<feature type="compositionally biased region" description="Low complexity" evidence="4">
    <location>
        <begin position="1208"/>
        <end position="1220"/>
    </location>
</feature>
<feature type="compositionally biased region" description="Low complexity" evidence="4">
    <location>
        <begin position="1229"/>
        <end position="1241"/>
    </location>
</feature>
<feature type="compositionally biased region" description="Low complexity" evidence="4">
    <location>
        <begin position="1249"/>
        <end position="1262"/>
    </location>
</feature>
<feature type="compositionally biased region" description="Polar residues" evidence="4">
    <location>
        <begin position="1271"/>
        <end position="1324"/>
    </location>
</feature>
<feature type="compositionally biased region" description="Polar residues" evidence="4">
    <location>
        <begin position="1331"/>
        <end position="1357"/>
    </location>
</feature>
<feature type="compositionally biased region" description="Polar residues" evidence="4">
    <location>
        <begin position="1364"/>
        <end position="1377"/>
    </location>
</feature>
<feature type="compositionally biased region" description="Low complexity" evidence="4">
    <location>
        <begin position="1384"/>
        <end position="1396"/>
    </location>
</feature>
<feature type="compositionally biased region" description="Low complexity" evidence="4">
    <location>
        <begin position="1411"/>
        <end position="1438"/>
    </location>
</feature>
<feature type="compositionally biased region" description="Polar residues" evidence="4">
    <location>
        <begin position="1439"/>
        <end position="1448"/>
    </location>
</feature>
<feature type="compositionally biased region" description="Low complexity" evidence="4">
    <location>
        <begin position="1458"/>
        <end position="1481"/>
    </location>
</feature>
<feature type="compositionally biased region" description="Polar residues" evidence="4">
    <location>
        <begin position="1483"/>
        <end position="1537"/>
    </location>
</feature>
<feature type="compositionally biased region" description="Low complexity" evidence="4">
    <location>
        <begin position="1552"/>
        <end position="1568"/>
    </location>
</feature>
<feature type="compositionally biased region" description="Polar residues" evidence="4">
    <location>
        <begin position="1569"/>
        <end position="1586"/>
    </location>
</feature>
<feature type="compositionally biased region" description="Polar residues" evidence="4">
    <location>
        <begin position="1606"/>
        <end position="1630"/>
    </location>
</feature>
<feature type="compositionally biased region" description="Polar residues" evidence="4">
    <location>
        <begin position="1653"/>
        <end position="1708"/>
    </location>
</feature>
<feature type="compositionally biased region" description="Low complexity" evidence="4">
    <location>
        <begin position="1709"/>
        <end position="1724"/>
    </location>
</feature>
<feature type="compositionally biased region" description="Polar residues" evidence="4">
    <location>
        <begin position="1725"/>
        <end position="1797"/>
    </location>
</feature>
<feature type="compositionally biased region" description="Polar residues" evidence="4">
    <location>
        <begin position="1805"/>
        <end position="1840"/>
    </location>
</feature>
<feature type="compositionally biased region" description="Low complexity" evidence="4">
    <location>
        <begin position="1856"/>
        <end position="1877"/>
    </location>
</feature>
<feature type="compositionally biased region" description="Low complexity" evidence="4">
    <location>
        <begin position="1889"/>
        <end position="1906"/>
    </location>
</feature>
<feature type="compositionally biased region" description="Polar residues" evidence="4">
    <location>
        <begin position="1914"/>
        <end position="1935"/>
    </location>
</feature>
<feature type="compositionally biased region" description="Low complexity" evidence="4">
    <location>
        <begin position="1943"/>
        <end position="1959"/>
    </location>
</feature>
<feature type="compositionally biased region" description="Polar residues" evidence="4">
    <location>
        <begin position="1967"/>
        <end position="1982"/>
    </location>
</feature>
<feature type="compositionally biased region" description="Polar residues" evidence="4">
    <location>
        <begin position="2011"/>
        <end position="2053"/>
    </location>
</feature>
<feature type="compositionally biased region" description="Low complexity" evidence="4">
    <location>
        <begin position="2054"/>
        <end position="2082"/>
    </location>
</feature>
<feature type="compositionally biased region" description="Polar residues" evidence="4">
    <location>
        <begin position="2083"/>
        <end position="2104"/>
    </location>
</feature>
<feature type="compositionally biased region" description="Low complexity" evidence="4">
    <location>
        <begin position="2105"/>
        <end position="2130"/>
    </location>
</feature>
<feature type="compositionally biased region" description="Polar residues" evidence="4">
    <location>
        <begin position="2131"/>
        <end position="2184"/>
    </location>
</feature>
<feature type="compositionally biased region" description="Polar residues" evidence="4">
    <location>
        <begin position="2191"/>
        <end position="2221"/>
    </location>
</feature>
<feature type="compositionally biased region" description="Low complexity" evidence="4">
    <location>
        <begin position="2222"/>
        <end position="2240"/>
    </location>
</feature>
<feature type="compositionally biased region" description="Polar residues" evidence="4">
    <location>
        <begin position="2243"/>
        <end position="2267"/>
    </location>
</feature>
<feature type="compositionally biased region" description="Polar residues" evidence="4">
    <location>
        <begin position="2274"/>
        <end position="2290"/>
    </location>
</feature>
<feature type="compositionally biased region" description="Low complexity" evidence="4">
    <location>
        <begin position="2291"/>
        <end position="2303"/>
    </location>
</feature>
<feature type="compositionally biased region" description="Low complexity" evidence="4">
    <location>
        <begin position="2312"/>
        <end position="2324"/>
    </location>
</feature>
<feature type="compositionally biased region" description="Low complexity" evidence="4">
    <location>
        <begin position="2332"/>
        <end position="2345"/>
    </location>
</feature>
<feature type="compositionally biased region" description="Polar residues" evidence="4">
    <location>
        <begin position="2354"/>
        <end position="2392"/>
    </location>
</feature>
<feature type="compositionally biased region" description="Low complexity" evidence="4">
    <location>
        <begin position="2393"/>
        <end position="2407"/>
    </location>
</feature>
<feature type="compositionally biased region" description="Polar residues" evidence="4">
    <location>
        <begin position="2414"/>
        <end position="2440"/>
    </location>
</feature>
<feature type="compositionally biased region" description="Polar residues" evidence="4">
    <location>
        <begin position="2447"/>
        <end position="2460"/>
    </location>
</feature>
<feature type="compositionally biased region" description="Low complexity" evidence="4">
    <location>
        <begin position="2467"/>
        <end position="2483"/>
    </location>
</feature>
<feature type="compositionally biased region" description="Low complexity" evidence="4">
    <location>
        <begin position="2494"/>
        <end position="2521"/>
    </location>
</feature>
<feature type="compositionally biased region" description="Polar residues" evidence="4">
    <location>
        <begin position="2522"/>
        <end position="2531"/>
    </location>
</feature>
<feature type="compositionally biased region" description="Low complexity" evidence="4">
    <location>
        <begin position="2541"/>
        <end position="2564"/>
    </location>
</feature>
<feature type="compositionally biased region" description="Polar residues" evidence="4">
    <location>
        <begin position="2566"/>
        <end position="2578"/>
    </location>
</feature>
<feature type="compositionally biased region" description="Low complexity" evidence="4">
    <location>
        <begin position="2579"/>
        <end position="2604"/>
    </location>
</feature>
<feature type="compositionally biased region" description="Polar residues" evidence="4">
    <location>
        <begin position="2605"/>
        <end position="2658"/>
    </location>
</feature>
<feature type="compositionally biased region" description="Polar residues" evidence="4">
    <location>
        <begin position="2665"/>
        <end position="2695"/>
    </location>
</feature>
<feature type="compositionally biased region" description="Low complexity" evidence="4">
    <location>
        <begin position="2696"/>
        <end position="2714"/>
    </location>
</feature>
<feature type="compositionally biased region" description="Polar residues" evidence="4">
    <location>
        <begin position="2717"/>
        <end position="2741"/>
    </location>
</feature>
<feature type="compositionally biased region" description="Polar residues" evidence="4">
    <location>
        <begin position="2748"/>
        <end position="2764"/>
    </location>
</feature>
<feature type="compositionally biased region" description="Low complexity" evidence="4">
    <location>
        <begin position="2765"/>
        <end position="2777"/>
    </location>
</feature>
<feature type="compositionally biased region" description="Low complexity" evidence="4">
    <location>
        <begin position="2786"/>
        <end position="2798"/>
    </location>
</feature>
<feature type="compositionally biased region" description="Low complexity" evidence="4">
    <location>
        <begin position="2806"/>
        <end position="2819"/>
    </location>
</feature>
<feature type="compositionally biased region" description="Polar residues" evidence="4">
    <location>
        <begin position="2828"/>
        <end position="2881"/>
    </location>
</feature>
<feature type="compositionally biased region" description="Polar residues" evidence="4">
    <location>
        <begin position="2888"/>
        <end position="2914"/>
    </location>
</feature>
<feature type="compositionally biased region" description="Polar residues" evidence="4">
    <location>
        <begin position="2921"/>
        <end position="2934"/>
    </location>
</feature>
<feature type="compositionally biased region" description="Low complexity" evidence="4">
    <location>
        <begin position="2941"/>
        <end position="2957"/>
    </location>
</feature>
<feature type="compositionally biased region" description="Low complexity" evidence="4">
    <location>
        <begin position="2968"/>
        <end position="2995"/>
    </location>
</feature>
<feature type="compositionally biased region" description="Polar residues" evidence="4">
    <location>
        <begin position="2996"/>
        <end position="3005"/>
    </location>
</feature>
<feature type="compositionally biased region" description="Low complexity" evidence="4">
    <location>
        <begin position="3015"/>
        <end position="3038"/>
    </location>
</feature>
<feature type="compositionally biased region" description="Polar residues" evidence="4">
    <location>
        <begin position="3040"/>
        <end position="3094"/>
    </location>
</feature>
<feature type="compositionally biased region" description="Low complexity" evidence="4">
    <location>
        <begin position="3109"/>
        <end position="3125"/>
    </location>
</feature>
<feature type="compositionally biased region" description="Polar residues" evidence="4">
    <location>
        <begin position="3126"/>
        <end position="3143"/>
    </location>
</feature>
<feature type="compositionally biased region" description="Polar residues" evidence="4">
    <location>
        <begin position="3163"/>
        <end position="3187"/>
    </location>
</feature>
<feature type="compositionally biased region" description="Polar residues" evidence="4">
    <location>
        <begin position="3210"/>
        <end position="3265"/>
    </location>
</feature>
<feature type="compositionally biased region" description="Low complexity" evidence="4">
    <location>
        <begin position="3266"/>
        <end position="3281"/>
    </location>
</feature>
<feature type="compositionally biased region" description="Polar residues" evidence="4">
    <location>
        <begin position="3282"/>
        <end position="3354"/>
    </location>
</feature>
<feature type="compositionally biased region" description="Polar residues" evidence="4">
    <location>
        <begin position="3362"/>
        <end position="3397"/>
    </location>
</feature>
<feature type="compositionally biased region" description="Low complexity" evidence="4">
    <location>
        <begin position="3413"/>
        <end position="3434"/>
    </location>
</feature>
<feature type="compositionally biased region" description="Low complexity" evidence="4">
    <location>
        <begin position="3446"/>
        <end position="3463"/>
    </location>
</feature>
<feature type="compositionally biased region" description="Polar residues" evidence="4">
    <location>
        <begin position="3468"/>
        <end position="3482"/>
    </location>
</feature>
<feature type="compositionally biased region" description="Low complexity" evidence="4">
    <location>
        <begin position="3499"/>
        <end position="3517"/>
    </location>
</feature>
<feature type="compositionally biased region" description="Polar residues" evidence="4">
    <location>
        <begin position="3524"/>
        <end position="3539"/>
    </location>
</feature>
<feature type="compositionally biased region" description="Polar residues" evidence="4">
    <location>
        <begin position="3568"/>
        <end position="3610"/>
    </location>
</feature>
<feature type="compositionally biased region" description="Low complexity" evidence="4">
    <location>
        <begin position="3611"/>
        <end position="3639"/>
    </location>
</feature>
<feature type="compositionally biased region" description="Polar residues" evidence="4">
    <location>
        <begin position="3640"/>
        <end position="3661"/>
    </location>
</feature>
<feature type="compositionally biased region" description="Low complexity" evidence="4">
    <location>
        <begin position="3662"/>
        <end position="3705"/>
    </location>
</feature>
<feature type="compositionally biased region" description="Polar residues" evidence="4">
    <location>
        <begin position="3706"/>
        <end position="3741"/>
    </location>
</feature>
<feature type="compositionally biased region" description="Polar residues" evidence="4">
    <location>
        <begin position="3748"/>
        <end position="3778"/>
    </location>
</feature>
<feature type="compositionally biased region" description="Low complexity" evidence="4">
    <location>
        <begin position="3779"/>
        <end position="3797"/>
    </location>
</feature>
<feature type="compositionally biased region" description="Polar residues" evidence="4">
    <location>
        <begin position="3800"/>
        <end position="3824"/>
    </location>
</feature>
<feature type="compositionally biased region" description="Polar residues" evidence="4">
    <location>
        <begin position="3831"/>
        <end position="3847"/>
    </location>
</feature>
<feature type="compositionally biased region" description="Low complexity" evidence="4">
    <location>
        <begin position="3848"/>
        <end position="3860"/>
    </location>
</feature>
<feature type="compositionally biased region" description="Low complexity" evidence="4">
    <location>
        <begin position="3869"/>
        <end position="3881"/>
    </location>
</feature>
<feature type="compositionally biased region" description="Low complexity" evidence="4">
    <location>
        <begin position="3889"/>
        <end position="3902"/>
    </location>
</feature>
<feature type="compositionally biased region" description="Polar residues" evidence="4">
    <location>
        <begin position="3911"/>
        <end position="3963"/>
    </location>
</feature>
<feature type="compositionally biased region" description="Polar residues" evidence="4">
    <location>
        <begin position="3971"/>
        <end position="3997"/>
    </location>
</feature>
<feature type="compositionally biased region" description="Polar residues" evidence="4">
    <location>
        <begin position="4004"/>
        <end position="4017"/>
    </location>
</feature>
<feature type="compositionally biased region" description="Low complexity" evidence="4">
    <location>
        <begin position="4024"/>
        <end position="4036"/>
    </location>
</feature>
<feature type="compositionally biased region" description="Low complexity" evidence="4">
    <location>
        <begin position="4051"/>
        <end position="4078"/>
    </location>
</feature>
<feature type="compositionally biased region" description="Polar residues" evidence="4">
    <location>
        <begin position="4079"/>
        <end position="4088"/>
    </location>
</feature>
<feature type="compositionally biased region" description="Low complexity" evidence="4">
    <location>
        <begin position="4098"/>
        <end position="4121"/>
    </location>
</feature>
<feature type="compositionally biased region" description="Polar residues" evidence="4">
    <location>
        <begin position="4123"/>
        <end position="4177"/>
    </location>
</feature>
<feature type="compositionally biased region" description="Low complexity" evidence="4">
    <location>
        <begin position="4192"/>
        <end position="4208"/>
    </location>
</feature>
<feature type="compositionally biased region" description="Polar residues" evidence="4">
    <location>
        <begin position="4209"/>
        <end position="4226"/>
    </location>
</feature>
<feature type="compositionally biased region" description="Low complexity" evidence="4">
    <location>
        <begin position="4227"/>
        <end position="4249"/>
    </location>
</feature>
<feature type="compositionally biased region" description="Polar residues" evidence="4">
    <location>
        <begin position="4250"/>
        <end position="4270"/>
    </location>
</feature>
<feature type="compositionally biased region" description="Polar residues" evidence="4">
    <location>
        <begin position="4293"/>
        <end position="4348"/>
    </location>
</feature>
<feature type="compositionally biased region" description="Low complexity" evidence="4">
    <location>
        <begin position="4349"/>
        <end position="4364"/>
    </location>
</feature>
<feature type="compositionally biased region" description="Polar residues" evidence="4">
    <location>
        <begin position="4369"/>
        <end position="4437"/>
    </location>
</feature>
<feature type="compositionally biased region" description="Polar residues" evidence="4">
    <location>
        <begin position="4445"/>
        <end position="4480"/>
    </location>
</feature>
<feature type="compositionally biased region" description="Low complexity" evidence="4">
    <location>
        <begin position="4496"/>
        <end position="4517"/>
    </location>
</feature>
<feature type="compositionally biased region" description="Low complexity" evidence="4">
    <location>
        <begin position="4529"/>
        <end position="4546"/>
    </location>
</feature>
<feature type="compositionally biased region" description="Polar residues" evidence="4">
    <location>
        <begin position="4551"/>
        <end position="4571"/>
    </location>
</feature>
<feature type="compositionally biased region" description="Low complexity" evidence="4">
    <location>
        <begin position="4582"/>
        <end position="4600"/>
    </location>
</feature>
<feature type="compositionally biased region" description="Polar residues" evidence="4">
    <location>
        <begin position="4607"/>
        <end position="4622"/>
    </location>
</feature>
<feature type="compositionally biased region" description="Polar residues" evidence="4">
    <location>
        <begin position="4651"/>
        <end position="4688"/>
    </location>
</feature>
<feature type="compositionally biased region" description="Low complexity" evidence="4">
    <location>
        <begin position="4689"/>
        <end position="4710"/>
    </location>
</feature>
<feature type="compositionally biased region" description="Low complexity" evidence="4">
    <location>
        <begin position="4722"/>
        <end position="4739"/>
    </location>
</feature>
<feature type="compositionally biased region" description="Polar residues" evidence="4">
    <location>
        <begin position="4747"/>
        <end position="4768"/>
    </location>
</feature>
<feature type="compositionally biased region" description="Low complexity" evidence="4">
    <location>
        <begin position="4776"/>
        <end position="4792"/>
    </location>
</feature>
<feature type="compositionally biased region" description="Polar residues" evidence="4">
    <location>
        <begin position="4800"/>
        <end position="4814"/>
    </location>
</feature>
<feature type="compositionally biased region" description="Polar residues" evidence="4">
    <location>
        <begin position="4887"/>
        <end position="4917"/>
    </location>
</feature>
<feature type="compositionally biased region" description="Low complexity" evidence="4">
    <location>
        <begin position="4918"/>
        <end position="4931"/>
    </location>
</feature>
<feature type="compositionally biased region" description="Polar residues" evidence="4">
    <location>
        <begin position="4932"/>
        <end position="5024"/>
    </location>
</feature>
<feature type="compositionally biased region" description="Polar residues" evidence="4">
    <location>
        <begin position="5048"/>
        <end position="5061"/>
    </location>
</feature>
<feature type="compositionally biased region" description="Low complexity" evidence="4">
    <location>
        <begin position="5094"/>
        <end position="5112"/>
    </location>
</feature>
<feature type="site" description="Cleavage" evidence="1">
    <location>
        <begin position="5229"/>
        <end position="5230"/>
    </location>
</feature>
<feature type="glycosylation site" description="N-linked (GlcNAc...) asparagine" evidence="2">
    <location>
        <position position="154"/>
    </location>
</feature>
<feature type="glycosylation site" description="N-linked (GlcNAc...) asparagine" evidence="2">
    <location>
        <position position="170"/>
    </location>
</feature>
<feature type="glycosylation site" description="N-linked (GlcNAc...) asparagine" evidence="2">
    <location>
        <position position="176"/>
    </location>
</feature>
<feature type="glycosylation site" description="N-linked (GlcNAc...) asparagine" evidence="2">
    <location>
        <position position="382"/>
    </location>
</feature>
<feature type="glycosylation site" description="N-linked (GlcNAc...) asparagine" evidence="2">
    <location>
        <position position="738"/>
    </location>
</feature>
<feature type="glycosylation site" description="N-linked (GlcNAc...) asparagine" evidence="2">
    <location>
        <position position="1793"/>
    </location>
</feature>
<feature type="glycosylation site" description="N-linked (GlcNAc...) asparagine" evidence="2">
    <location>
        <position position="3350"/>
    </location>
</feature>
<feature type="glycosylation site" description="N-linked (GlcNAc...) asparagine" evidence="2">
    <location>
        <position position="4433"/>
    </location>
</feature>
<feature type="glycosylation site" description="N-linked (GlcNAc...) asparagine" evidence="2">
    <location>
        <position position="4571"/>
    </location>
</feature>
<feature type="glycosylation site" description="N-linked (GlcNAc...) asparagine" evidence="2">
    <location>
        <position position="5169"/>
    </location>
</feature>
<feature type="glycosylation site" description="N-linked (GlcNAc...) asparagine" evidence="2">
    <location>
        <position position="5182"/>
    </location>
</feature>
<feature type="glycosylation site" description="N-linked (GlcNAc...) asparagine" evidence="2">
    <location>
        <position position="5197"/>
    </location>
</feature>
<feature type="glycosylation site" description="N-linked (GlcNAc...) asparagine" evidence="2">
    <location>
        <position position="5228"/>
    </location>
</feature>
<feature type="glycosylation site" description="N-linked (GlcNAc...) asparagine" evidence="2">
    <location>
        <position position="5264"/>
    </location>
</feature>
<feature type="disulfide bond" evidence="1">
    <location>
        <begin position="5144"/>
        <end position="5153"/>
    </location>
</feature>
<feature type="splice variant" id="VSP_056721" description="In isoform 2." evidence="9">
    <location>
        <begin position="23"/>
        <end position="165"/>
    </location>
</feature>
<feature type="sequence variant" id="VAR_042906" description="In dbSNP:rs11766125.">
    <original>T</original>
    <variation>R</variation>
    <location>
        <position position="4775"/>
    </location>
</feature>
<feature type="sequence conflict" description="In Ref. 2; AAD55679." evidence="9" ref="2">
    <original>PGST</original>
    <variation>RNRP</variation>
    <location>
        <begin position="3283"/>
        <end position="3286"/>
    </location>
</feature>
<feature type="sequence conflict" description="In Ref. 2; AAD55679." evidence="9" ref="2">
    <original>S</original>
    <variation>N</variation>
    <location>
        <position position="3556"/>
    </location>
</feature>
<feature type="sequence conflict" description="In Ref. 2; AAD55679." evidence="9" ref="2">
    <original>S</original>
    <variation>P</variation>
    <location>
        <position position="3686"/>
    </location>
</feature>
<feature type="sequence conflict" description="In Ref. 2; AAD55679." evidence="9" ref="2">
    <original>S</original>
    <variation>P</variation>
    <location>
        <position position="3697"/>
    </location>
</feature>
<feature type="sequence conflict" description="In Ref. 2; AAD55679." evidence="9" ref="2">
    <original>P</original>
    <variation>T</variation>
    <location>
        <position position="3790"/>
    </location>
</feature>
<feature type="sequence conflict" description="In Ref. 2; AAD55679." evidence="9" ref="2">
    <original>G</original>
    <variation>S</variation>
    <location>
        <position position="3809"/>
    </location>
</feature>
<feature type="sequence conflict" description="In Ref. 2; AAD55679." evidence="9" ref="2">
    <original>R</original>
    <variation>G</variation>
    <location>
        <position position="3966"/>
    </location>
</feature>
<feature type="sequence conflict" description="In Ref. 2; AAD55679." evidence="9" ref="2">
    <original>K</original>
    <variation>T</variation>
    <location>
        <position position="4037"/>
    </location>
</feature>
<feature type="sequence conflict" description="In Ref. 2; AAD55679." evidence="9" ref="2">
    <original>T</original>
    <variation>K</variation>
    <location>
        <position position="4137"/>
    </location>
</feature>
<feature type="sequence conflict" description="In Ref. 2; AAD55679." evidence="9" ref="2">
    <original>T</original>
    <variation>A</variation>
    <location>
        <position position="4214"/>
    </location>
</feature>
<feature type="sequence conflict" description="In Ref. 2; AAD55679." evidence="9" ref="2">
    <original>ST</original>
    <variation>GP</variation>
    <location>
        <begin position="4238"/>
        <end position="4239"/>
    </location>
</feature>
<feature type="sequence conflict" description="In Ref. 2; AAD55678." evidence="9" ref="2">
    <original>T</original>
    <variation>R</variation>
    <location>
        <position position="4901"/>
    </location>
</feature>
<gene>
    <name type="primary">MUC12</name>
    <name type="synonym">MUC11</name>
</gene>
<proteinExistence type="evidence at protein level"/>
<protein>
    <recommendedName>
        <fullName>Mucin-12</fullName>
        <shortName>MUC-12</shortName>
    </recommendedName>
    <alternativeName>
        <fullName>Mucin-11</fullName>
        <shortName>MUC-11</shortName>
    </alternativeName>
</protein>
<sequence length="5478" mass="558164">MLVIWILTLALRLCASVTTVTPEGSAVHKAISQQGTLWTGEVLEKQTVEQGKSTLRRQKNHFHRSAGELRCRNALKDEGASAGWSVMFAGESVVVLVHLWMTGARVKNLGLVEFASPGDDGDGRAEGFSLGLPLSEQARAAGAREKERQETVINHSTFSGFSQITGSTVNTSIGGNTTSASTPSSSDPFTTFSDYGVSVTFITGSTATKHFLDSSTNSGHSEESTVSHSGPGATGTTLFPSHSATSVFVGEPKTSPITSASMETTALPGSTTTAGLSEKSTTFYSSPRSPDRTLSPARTTSSGVSEKSTTSHSRPGPTHTIAFPDSTTMPGVSQESTASHSIPGSTDTTLSPGTTTPSSLGPESTTFHSSPGYTKTTRLPDNTTTSGLLEASTPVHSSTGSPHTTLSPSSSTTHEGEPTTFQSWPSSKDTSPAPSGTTSAFVKLSTTYHSSPSSTPTTHFSASSTTLGHSEESTPVHSSPVATATTPPPARSATSGHVEESTAYHRSPGSTQTMHFPESSTTSGHSEESATFHGSTTHTKSSTPSTTAALAHTSYHSSLGSTETTHFRDSSTISGRSEESKASHSSPDAMATTVLPAGSTPSVLVGDSTPSPISSGSMETTALPGSTTKPGLSEKSTTFYSSPRSPDTTHLPASMTSSGVSEESTTSHSRPGSTHTTAFPGSTTMPGLSQESTASHSSPGPTDTTLSPGSTTASSLGPEYTTFHSRPGSTETTLLPDNTTASGLLEASMPVHSSTRSPHTTLSPAGSTTRQGESTTFHSWPSSKDTRPAPPTTTSAFVEPSTTSHGSPSSIPTTHISARSTTSGLVEESTTYHSSPGSTQTMHFPESDTTSGRGEESTTSHSSTTHTISSAPSTTSALVEEPTSYHSSPGSTATTHFPDSSTTSGRSEESTASHSSQDATGTIVLPARSTTSVLLGESTTSPISSGSMETTALPGSTTTPGLSERSTTFHSSPRSPATTLSPASTTSSGVSEESTTSRSRPGSTHTTAFPDSTTTPGLSRHSTTSHSSPGSTDTTLLPASTTTSGPSQESTTSHSSSGSTDTALSPGSTTALSFGQESTTFHSNPGSTHTTLFPDSTTSSGIVEASTRVHSSTGSPRTTLSPASSTSPGLQGESTAFQTHPASTHTTPSPPSTATAPVEESTTYHRSPGSTPTTHFPASSTTSGHSEKSTIFHSSPDASGTTPSSAHSTTSGRGESTTSRISPGSTEITTLPGSTTTPGLSEASTTFYSSPRSPTTTLSPASMTSLGVGEESTTSRSQPGSTHSTVSPASTTTPGLSEESTTVYSSSRGSTETTVFPHSTTTSVHGEEPTTFHSRPASTHTTLFTEDSTTSGLTEESTAFPGSPASTQTGLPATLTTADLGEESTTFPSSSGSTGTKLSPARSTTSGLVGESTPSRLSPSSTETTTLPGSPTTPSLSEKSTTFYTSPRSPDATLSPATTTSSGVSEESSTSHSQPGSTHTTAFPDSTTTSDLSQEPTTSHSSQGSTEATLSPGSTTASSLGQQSTTFHSSPGDTETTLLPDDTITSGLVEASTPTHSSTGSLHTTLTPASSTSAGLQEESTTFQSWPSSSDTTPSPPGTTAAPVEVSTTYHSRPSSTPTTHFSASSTTLGRSEESTTVHSSPGATGTALFPTRSATSVLVGEPTTSPISSGSTETTALPGSTTTAGLSEKSTTFYSSPRSPDTTLSPASTTSSGVSEESTTSHSRPGSTHTTAFPGSTTMPGVSQESTASHSSPGSTDTTLSPGSTTASSLGPESTTFHSSPGSTETTLLPDNTTASGLLEASTPVHSSTGSPHTTLSPAGSTTRQGESTTFQSWPSSKDTMPAPPTTTSAFVELSTTSHGSPSSTPTTHFSASSTTLGRSEESTTVHSSPVATATTPSPARSTTSGLVEESTAYHSSPGSTQTMHFPESSTASGRSEESRTSHSSTTHTISSPPSTTSALVEEPTSYHSSPGSTATTHFPDSSTTSGRSEESTASHSSQDATGTIVLPARSTTSVLLGESTTSPISSGSMETTALPGSTTTPGLSEKSTTFHSSPRSPATTLSPASTTSSGVSEESTTSHSRPGSTHTTAFPDSTTTPGLSRHSTTSHSSPGSTDTTLLPASTTTSGPSQESTTSHSSPGSTDTALSPGSTTALSFGQESTTFHSSPGSTHTTLFPDSTTSSGIVEASTRVHSSTGSPRTTLSPASSTSPGLQGESTAFQTHPASTHTTPSPPSTATAPVEESTTYHRSPGSTPTTHFPASSTTSGHSEKSTIFHSSPDASGTTPSSAHSTTSGRGESTTSRISPGSTEITTLPGSTTTPGLSEASTTFYSSPRSPTTTLSPASMTSLGVGEESTTSRSQPGSTHSTVSPASTTTPGLSEESTTVYSSSPGSTETTVFPRTPTTSVRGEEPTTFHSRPASTHTTLFTEDSTTSGLTEESTAFPGSPASTQTGLPATLTTADLGEESTTFPSSSGSTGTTLSPARSTTSGLVGESTPSRLSPSSTETTTLPGSPTTPSLSEKSTTFYTSPRSPDATLSPATTTSSGVSEESSTSHSQPGSTHTTAFPDSTTTPGLSRHSTTSHSSPGSTDTTLLPASTTTSGPSQESTTSHSSPGSTDTALSPGSTTALSFGQESTTFHSSPGSTHTTLFPDSTTSSGIVEASTRVHSSTGSPRTTLSPASSTSPGLQGESTTFQTHPASTHTTPSPPSTATAPVEESTTYHRSPGSTPTTHFPASSTTSGHSEKSTIFHSSPDASGTTPSSAHSTTSGRGESTTSRISPGSTEITTLPGSTTTPGLSEASTTFYSSPRSPTTTLSPASMTSLGVGEESTTSRSQPGSTHSTVSPASTTTPGLSEESTTVYSSSPGSTETTVFPRSTTTSVRGEEPTTFHSRPASTHTTLFTEDSTTSGLTEESTAFPGSPASTQTGLPATLTTADLGEESTTFPSSSGSTGTTLSPARSTTSGLVGESTPSRLSPSSTETTTLPGSPTTPSLSEKSTTFYTSPRSPDATLSPATTTSSGVSEESSTSHSQPGSTHTTAFPDSTTTSGLSQEPTASHSSQGSTEATLSPGSTTASSLGQQSTTFHSSPGDTETTLLPDDTITSGLVEASTPTHSSTGSLHTTLTPASSTSAGLQEESTTFQSWPSSSDTTPSPPGTTAAPVEVSTTYHSRPSSTPTTHFSASSTTLGRSEESTTVHSSPGATGTALFPTRSATSVLVGEPTTSPISSGSTETTALPGSTTTAGLSEKSTTFYSSPRSPDTTLSPASTTSSGVSEESTTSHSRPGSTHTTAFPGSTTMPGVSQESTASHSSPGSTDTTLSPGSTTASSLGPESTTFHSGPGSTETTLLPDNTTASGLLEASTPVHSSTGSPHTTLSPAGSTTRQGESTTFQSWPNSKDTTPAPPTTTSAFVELSTTSHGSPSSTPTTHFSASSTTLGRSEESTTVHSSPVATATTPSPARSTTSGLVEESTTYHSSPGSTQTMHFPESDTTSGRGEESTTSHSSTTHTISSAPSTTSALVEEPTSYHSSPGSTATTHFPDSSTTSGRSEESTASHSSQDATGTIVLPARSTTSVLLGESTTSPISSGSMETTALPGSTTTPGLSEKSTTFHSSPRSPATTLSPASTTSSGVSEESTTSHSRPGSTHTTAFPDSTTTPGLSRHSTTSHSSPGSTDTTLLPASTTTSGSSQESTTSHSSSGSTDTALSPGSTTALSFGQESTTFHSSPGSTHTTLFPDSTTSSGIVEASTRVHSSTGSPRTTLSPASSTSPGLQGESTAFQTHPASTHTTPSPPSTATAPVEESTTYHRSPGSTPTTHFPASSTTSGHSEKSTIFHSSPDASGTTPSSAHSTTSGRGESTTSRISPGSTEITTLPGSTTTPGLSEASTTFYSSPRSPTTTLSPASMTSLGVGEESTTSRSQPGSTHSTVSPASTTTPGLSEESTTVYSSSPGSTETTVFPRSTTTSVRREEPTTFHSRPASTHTTLFTEDSTTSGLTEESTAFPGSPASTQTGLPATLTTADLGEESTTFPSSSGSTGTKLSPARSTTSGLVGESTPSRLSPSSTETTTLPGSPTTPSLSEKSTTFYTSPRSPDATLSPATTTSSGVSEESSTSHSQPGSTHTTAFPDSTTTSGLSQEPTTSHSSQGSTEATLSPGSTTASSLGQQSTTFHSSPGDTETTLLPDDTITSGLVEASTPTHSSTGSLHTTLTPASSTSTGLQEESTTFQSWPSSSDTTPSPPSTTAVPVEVSTTYHSRPSSTPTTHFSASSTTLGRSEESTTVHSSPGATGTALFPTRSATSVLVGEPTTSPISSGSTETTALPGSTTTAGLSEKSTTFYSSPRSPDTTLSPASTTSSGVSEESTTSHSRPGSMHTTAFPSSTTMPGVSQESTASHSSPGSTDTTLSPGSTTASSLGPESTTFHSSPGSTETTLLPDNTTASGLLEASTPVHSSTGSPHTTLSPAGSTTRQGESTTFQSWPNSKDTTPAPPTTTSAFVELSTTSHGSPSSTPTTHFSASSTTLGRSEESTTVHSSPVATATTPSPARSTTSGLVEESTTYHSSPGSTQTMHFPESNTTSGRGEESTTSHSSTTHTISSAPSTTSALVEEPTSYHSSPGSTATTHFPDSSTTSGRSEESTASHSSQDATGTIVLPARSTTSVLLGESTTSPISSGSMETTALPGSTTTPGLSEKSTTFHSSPSSTPTTHFSASSTTLGRSEESTTVHSSPVATATTPSPARSTTSGLVEESTAYHSSPGSTQTMHFPESSTASGRSEESRTSHSSTTHTISSPPSTTSALVEEPTSYHSSPGSIATTHFPESSTTSGRSEESTASHSSPDTNGITPLPAHFTTSGRIAESTTFYISPGSMETTLASTATTPGLSAKSTILYSSSRSPDQTLSPASMTSSSISGEPTSLYSQAESTHTTAFPASTTTSGLSQESTTFHSKPGSTETTLSPGSITTSSFAQEFTTPHSQPGSALSTVSPASTTVPGLSEESTTFYSSPGSTETTAFSHSNTMSIHSQQSTPFPDSPGFTHTVLPATLTTTDIGQESTAFHSSSDATGTTPLPARSTASDLVGEPTTFYISPSPTYTTLFPASSSTSGLTEESTTFHTSPSFTSTIVSTESLETLAPGLCQEGQIWNGKQCVCPQGYVGYQCLSPLESFPVETPEKLNATLGMTVKVTYRNFTEKMNDASSQEYQNFSTLFKNRMDVVLKGDNLPQYRGVNIRRLLNGSIVVKNDVILEADYTLEYEELFENLAEIVKAKIMNETRTTLLDPDSCRKAILCYSEEDTFVDSSVTPGFDFQEQCTQKAAEGYTQFYYVDVLDGKLACVNKCTKGTKSQMNCNLGTCQLQRSGPRCLCPNTNTHWYWGETCEFNIAKSLVYGIVGAVMAVLLLALIILIILFSLSQRKRHREQYDVPQEWRKEGTPGIFQKTAIWEDQNLRESRFGLENAYNNFRPTLETVDSGTELHIQRPEMVASTV</sequence>
<evidence type="ECO:0000250" key="1"/>
<evidence type="ECO:0000255" key="2"/>
<evidence type="ECO:0000255" key="3">
    <source>
        <dbReference type="PROSITE-ProRule" id="PRU00188"/>
    </source>
</evidence>
<evidence type="ECO:0000256" key="4">
    <source>
        <dbReference type="SAM" id="MobiDB-lite"/>
    </source>
</evidence>
<evidence type="ECO:0000269" key="5">
    <source>
    </source>
</evidence>
<evidence type="ECO:0000269" key="6">
    <source>
    </source>
</evidence>
<evidence type="ECO:0000269" key="7">
    <source>
    </source>
</evidence>
<evidence type="ECO:0000269" key="8">
    <source>
    </source>
</evidence>
<evidence type="ECO:0000305" key="9"/>
<reference key="1">
    <citation type="journal article" date="2003" name="Nature">
        <title>The DNA sequence of human chromosome 7.</title>
        <authorList>
            <person name="Hillier L.W."/>
            <person name="Fulton R.S."/>
            <person name="Fulton L.A."/>
            <person name="Graves T.A."/>
            <person name="Pepin K.H."/>
            <person name="Wagner-McPherson C."/>
            <person name="Layman D."/>
            <person name="Maas J."/>
            <person name="Jaeger S."/>
            <person name="Walker R."/>
            <person name="Wylie K."/>
            <person name="Sekhon M."/>
            <person name="Becker M.C."/>
            <person name="O'Laughlin M.D."/>
            <person name="Schaller M.E."/>
            <person name="Fewell G.A."/>
            <person name="Delehaunty K.D."/>
            <person name="Miner T.L."/>
            <person name="Nash W.E."/>
            <person name="Cordes M."/>
            <person name="Du H."/>
            <person name="Sun H."/>
            <person name="Edwards J."/>
            <person name="Bradshaw-Cordum H."/>
            <person name="Ali J."/>
            <person name="Andrews S."/>
            <person name="Isak A."/>
            <person name="Vanbrunt A."/>
            <person name="Nguyen C."/>
            <person name="Du F."/>
            <person name="Lamar B."/>
            <person name="Courtney L."/>
            <person name="Kalicki J."/>
            <person name="Ozersky P."/>
            <person name="Bielicki L."/>
            <person name="Scott K."/>
            <person name="Holmes A."/>
            <person name="Harkins R."/>
            <person name="Harris A."/>
            <person name="Strong C.M."/>
            <person name="Hou S."/>
            <person name="Tomlinson C."/>
            <person name="Dauphin-Kohlberg S."/>
            <person name="Kozlowicz-Reilly A."/>
            <person name="Leonard S."/>
            <person name="Rohlfing T."/>
            <person name="Rock S.M."/>
            <person name="Tin-Wollam A.-M."/>
            <person name="Abbott A."/>
            <person name="Minx P."/>
            <person name="Maupin R."/>
            <person name="Strowmatt C."/>
            <person name="Latreille P."/>
            <person name="Miller N."/>
            <person name="Johnson D."/>
            <person name="Murray J."/>
            <person name="Woessner J.P."/>
            <person name="Wendl M.C."/>
            <person name="Yang S.-P."/>
            <person name="Schultz B.R."/>
            <person name="Wallis J.W."/>
            <person name="Spieth J."/>
            <person name="Bieri T.A."/>
            <person name="Nelson J.O."/>
            <person name="Berkowicz N."/>
            <person name="Wohldmann P.E."/>
            <person name="Cook L.L."/>
            <person name="Hickenbotham M.T."/>
            <person name="Eldred J."/>
            <person name="Williams D."/>
            <person name="Bedell J.A."/>
            <person name="Mardis E.R."/>
            <person name="Clifton S.W."/>
            <person name="Chissoe S.L."/>
            <person name="Marra M.A."/>
            <person name="Raymond C."/>
            <person name="Haugen E."/>
            <person name="Gillett W."/>
            <person name="Zhou Y."/>
            <person name="James R."/>
            <person name="Phelps K."/>
            <person name="Iadanoto S."/>
            <person name="Bubb K."/>
            <person name="Simms E."/>
            <person name="Levy R."/>
            <person name="Clendenning J."/>
            <person name="Kaul R."/>
            <person name="Kent W.J."/>
            <person name="Furey T.S."/>
            <person name="Baertsch R.A."/>
            <person name="Brent M.R."/>
            <person name="Keibler E."/>
            <person name="Flicek P."/>
            <person name="Bork P."/>
            <person name="Suyama M."/>
            <person name="Bailey J.A."/>
            <person name="Portnoy M.E."/>
            <person name="Torrents D."/>
            <person name="Chinwalla A.T."/>
            <person name="Gish W.R."/>
            <person name="Eddy S.R."/>
            <person name="McPherson J.D."/>
            <person name="Olson M.V."/>
            <person name="Eichler E.E."/>
            <person name="Green E.D."/>
            <person name="Waterston R.H."/>
            <person name="Wilson R.K."/>
        </authorList>
    </citation>
    <scope>NUCLEOTIDE SEQUENCE [LARGE SCALE GENOMIC DNA]</scope>
</reference>
<reference key="2">
    <citation type="journal article" date="1999" name="Cancer Res.">
        <title>Two novel mucin genes down-regulated in colorectal cancer identified by differential display.</title>
        <authorList>
            <person name="Williams S.J."/>
            <person name="McGuckin M.A."/>
            <person name="Gotley D.C."/>
            <person name="Eyre H.J."/>
            <person name="Sutherland G.R."/>
            <person name="Antalis T.M."/>
        </authorList>
    </citation>
    <scope>NUCLEOTIDE SEQUENCE [MRNA] OF 3283-4239 AND 4894-5478</scope>
    <scope>TISSUE SPECIFICITY</scope>
    <source>
        <tissue>Colon mucosa</tissue>
    </source>
</reference>
<reference key="3">
    <citation type="journal article" date="2001" name="Biochem. Biophys. Res. Commun.">
        <title>Identification of MUC1 proteolytic cleavage sites in vivo.</title>
        <authorList>
            <person name="Parry S."/>
            <person name="Silverman H.S."/>
            <person name="McDermott K."/>
            <person name="Willis A."/>
            <person name="Hollingsworth M.A."/>
            <person name="Harris A."/>
        </authorList>
    </citation>
    <scope>CLEAVAGE</scope>
    <scope>MOTIF</scope>
</reference>
<reference key="4">
    <citation type="journal article" date="2005" name="Cell. Microbiol.">
        <title>The increase in mucin exocytosis and the upregulation of MUC genes encoding for membrane-bound mucins induced by the thiol-activated exotoxin listeriolysin O is a host cell defence response that inhibits the cell-entry of Listeria monocytogenes.</title>
        <authorList>
            <person name="Lievin-Le Moal V."/>
            <person name="Servin A.L."/>
            <person name="Coconnier-Polter M.-H."/>
        </authorList>
    </citation>
    <scope>INDUCTION</scope>
</reference>
<reference key="5">
    <citation type="journal article" date="2005" name="FEBS J.">
        <title>The role of the SEA (sea urchin sperm protein, enterokinase and agrin) module in cleavage of membrane-tethered mucins.</title>
        <authorList>
            <person name="Palmai-Pallag T."/>
            <person name="Khodabukus N."/>
            <person name="Kinarsky L."/>
            <person name="Leir S.-H."/>
            <person name="Sherman S."/>
            <person name="Hollingsworth M.A."/>
            <person name="Harris A."/>
        </authorList>
    </citation>
    <scope>CLEAVAGE</scope>
    <scope>MOTIF</scope>
    <scope>DOMAIN SEA</scope>
</reference>
<reference key="6">
    <citation type="journal article" date="2006" name="J. Mol. Med.">
        <title>Aberrant intestinal expression and allelic variants of mucin genes associated with inflammatory bowel disease.</title>
        <authorList>
            <person name="Moehle C."/>
            <person name="Ackermann N."/>
            <person name="Langmann T."/>
            <person name="Aslanidis C."/>
            <person name="Kel A."/>
            <person name="Kel-Margoulis O."/>
            <person name="Schmitz-Madry A."/>
            <person name="Zahn A."/>
            <person name="Stremmel W."/>
            <person name="Schmitz G."/>
        </authorList>
    </citation>
    <scope>FUNCTION</scope>
    <scope>TISSUE SPECIFICITY</scope>
</reference>
<comment type="function">
    <text evidence="8">Involved in epithelial cell protection, adhesion modulation, and signaling. May be involved in epithelial cell growth regulation. Stimulated by both cytokine TNF-alpha and TGF-beta in intestinal epithelium.</text>
</comment>
<comment type="subcellular location">
    <subcellularLocation>
        <location evidence="9">Membrane</location>
        <topology evidence="9">Single-pass type I membrane protein</topology>
    </subcellularLocation>
</comment>
<comment type="alternative products">
    <event type="alternative splicing"/>
    <isoform>
        <id>Q9UKN1-1</id>
        <name>1</name>
        <sequence type="displayed"/>
    </isoform>
    <isoform>
        <id>Q9UKN1-2</id>
        <name>2</name>
        <sequence type="described" ref="VSP_056721"/>
    </isoform>
</comment>
<comment type="tissue specificity">
    <text evidence="5 8">Ubiquitous, with higher expression in colon. Down-regulated in colorectal cancer as well as in the colon of patients with ulcerative colitis (UC) and Crohn's disease (CD).</text>
</comment>
<comment type="induction">
    <text evidence="7">By listeriolysin O.</text>
</comment>
<comment type="domain">
    <text evidence="6">The proteolytic cleavage occurs within the SEA domain. This domain is not interchangeable, suggesting that it is insufficient to mediate efficient cleavage.</text>
</comment>
<comment type="miscellaneous">
    <text>Infection by L.monocytogenes induces increases in mucin secretion and MUC4 and MUC12 transcription. This may constitute a host cell defense response that inhibits the entry of listeria monocytogenes in the cell.</text>
</comment>
<comment type="online information" name="Mucin database">
    <link uri="http://www.medkem.gu.se/mucinbiology/databases/"/>
</comment>
<keyword id="KW-0025">Alternative splicing</keyword>
<keyword id="KW-1015">Disulfide bond</keyword>
<keyword id="KW-0245">EGF-like domain</keyword>
<keyword id="KW-0325">Glycoprotein</keyword>
<keyword id="KW-0472">Membrane</keyword>
<keyword id="KW-1267">Proteomics identification</keyword>
<keyword id="KW-1185">Reference proteome</keyword>
<keyword id="KW-0677">Repeat</keyword>
<keyword id="KW-0732">Signal</keyword>
<keyword id="KW-0812">Transmembrane</keyword>
<keyword id="KW-1133">Transmembrane helix</keyword>
<name>MUC12_HUMAN</name>
<accession>Q9UKN1</accession>
<accession>A6ND38</accession>
<accession>F5GWV9</accession>
<accession>Q9UKN0</accession>
<dbReference type="EMBL" id="AC105446">
    <property type="status" value="NOT_ANNOTATED_CDS"/>
    <property type="molecule type" value="Genomic_DNA"/>
</dbReference>
<dbReference type="EMBL" id="AF147790">
    <property type="protein sequence ID" value="AAD55678.1"/>
    <property type="molecule type" value="mRNA"/>
</dbReference>
<dbReference type="EMBL" id="AF147791">
    <property type="protein sequence ID" value="AAD55679.1"/>
    <property type="molecule type" value="mRNA"/>
</dbReference>
<dbReference type="CCDS" id="CCDS55139.1">
    <molecule id="Q9UKN1-2"/>
</dbReference>
<dbReference type="RefSeq" id="NP_001157934.1">
    <molecule id="Q9UKN1-2"/>
    <property type="nucleotide sequence ID" value="NM_001164462.2"/>
</dbReference>
<dbReference type="SMR" id="Q9UKN1"/>
<dbReference type="BioGRID" id="115382">
    <property type="interactions" value="6"/>
</dbReference>
<dbReference type="FunCoup" id="Q9UKN1">
    <property type="interactions" value="82"/>
</dbReference>
<dbReference type="IntAct" id="Q9UKN1">
    <property type="interactions" value="4"/>
</dbReference>
<dbReference type="STRING" id="9606.ENSP00000441929"/>
<dbReference type="GlyCosmos" id="Q9UKN1">
    <property type="glycosylation" value="16 sites, 1 glycan"/>
</dbReference>
<dbReference type="GlyGen" id="Q9UKN1">
    <property type="glycosylation" value="30 sites, 1 O-linked glycan (8 sites)"/>
</dbReference>
<dbReference type="iPTMnet" id="Q9UKN1"/>
<dbReference type="PhosphoSitePlus" id="Q9UKN1"/>
<dbReference type="BioMuta" id="MUC12"/>
<dbReference type="DMDM" id="187609692"/>
<dbReference type="jPOST" id="Q9UKN1"/>
<dbReference type="MassIVE" id="Q9UKN1"/>
<dbReference type="PaxDb" id="9606-ENSP00000441929"/>
<dbReference type="PeptideAtlas" id="Q9UKN1"/>
<dbReference type="ProteomicsDB" id="24236"/>
<dbReference type="ProteomicsDB" id="84823">
    <molecule id="Q9UKN1-1"/>
</dbReference>
<dbReference type="Antibodypedia" id="9093">
    <property type="antibodies" value="81 antibodies from 19 providers"/>
</dbReference>
<dbReference type="DNASU" id="10071"/>
<dbReference type="Ensembl" id="ENST00000379442.7">
    <molecule id="Q9UKN1-1"/>
    <property type="protein sequence ID" value="ENSP00000368755.3"/>
    <property type="gene ID" value="ENSG00000205277.10"/>
</dbReference>
<dbReference type="Ensembl" id="ENST00000536621.6">
    <molecule id="Q9UKN1-2"/>
    <property type="protein sequence ID" value="ENSP00000441929.1"/>
    <property type="gene ID" value="ENSG00000205277.10"/>
</dbReference>
<dbReference type="GeneID" id="10071"/>
<dbReference type="KEGG" id="hsa:10071"/>
<dbReference type="MANE-Select" id="ENST00000536621.6">
    <molecule id="Q9UKN1-2"/>
    <property type="protein sequence ID" value="ENSP00000441929.1"/>
    <property type="RefSeq nucleotide sequence ID" value="NM_001164462.2"/>
    <property type="RefSeq protein sequence ID" value="NP_001157934.1"/>
</dbReference>
<dbReference type="UCSC" id="uc003uxo.4">
    <molecule id="Q9UKN1-1"/>
    <property type="organism name" value="human"/>
</dbReference>
<dbReference type="AGR" id="HGNC:7510"/>
<dbReference type="CTD" id="10071"/>
<dbReference type="DisGeNET" id="10071"/>
<dbReference type="GeneCards" id="MUC12"/>
<dbReference type="HGNC" id="HGNC:7510">
    <property type="gene designation" value="MUC12"/>
</dbReference>
<dbReference type="HPA" id="ENSG00000205277">
    <property type="expression patterns" value="Tissue enriched (intestine)"/>
</dbReference>
<dbReference type="MIM" id="604609">
    <property type="type" value="gene"/>
</dbReference>
<dbReference type="neXtProt" id="NX_Q9UKN1"/>
<dbReference type="OpenTargets" id="ENSG00000205277"/>
<dbReference type="VEuPathDB" id="HostDB:ENSG00000205277"/>
<dbReference type="eggNOG" id="ENOG502S5I0">
    <property type="taxonomic scope" value="Eukaryota"/>
</dbReference>
<dbReference type="GeneTree" id="ENSGT00940000165469"/>
<dbReference type="HOGENOM" id="CLU_223165_0_0_1"/>
<dbReference type="InParanoid" id="Q9UKN1"/>
<dbReference type="OMA" id="STVDCDG"/>
<dbReference type="OrthoDB" id="7493297at2759"/>
<dbReference type="PAN-GO" id="Q9UKN1">
    <property type="GO annotations" value="0 GO annotations based on evolutionary models"/>
</dbReference>
<dbReference type="PhylomeDB" id="Q9UKN1"/>
<dbReference type="TreeFam" id="TF344108"/>
<dbReference type="PathwayCommons" id="Q9UKN1"/>
<dbReference type="Reactome" id="R-HSA-5083625">
    <property type="pathway name" value="Defective GALNT3 causes HFTC"/>
</dbReference>
<dbReference type="Reactome" id="R-HSA-5083632">
    <property type="pathway name" value="Defective C1GALT1C1 causes TNPS"/>
</dbReference>
<dbReference type="Reactome" id="R-HSA-5083636">
    <property type="pathway name" value="Defective GALNT12 causes CRCS1"/>
</dbReference>
<dbReference type="Reactome" id="R-HSA-5621480">
    <property type="pathway name" value="Dectin-2 family"/>
</dbReference>
<dbReference type="Reactome" id="R-HSA-913709">
    <property type="pathway name" value="O-linked glycosylation of mucins"/>
</dbReference>
<dbReference type="Reactome" id="R-HSA-977068">
    <property type="pathway name" value="Termination of O-glycan biosynthesis"/>
</dbReference>
<dbReference type="SignaLink" id="Q9UKN1"/>
<dbReference type="SIGNOR" id="Q9UKN1"/>
<dbReference type="BioGRID-ORCS" id="10071">
    <property type="hits" value="12 hits in 1142 CRISPR screens"/>
</dbReference>
<dbReference type="ChiTaRS" id="MUC12">
    <property type="organism name" value="human"/>
</dbReference>
<dbReference type="GenomeRNAi" id="10071"/>
<dbReference type="Pharos" id="Q9UKN1">
    <property type="development level" value="Tbio"/>
</dbReference>
<dbReference type="PRO" id="PR:Q9UKN1"/>
<dbReference type="Proteomes" id="UP000005640">
    <property type="component" value="Chromosome 7"/>
</dbReference>
<dbReference type="RNAct" id="Q9UKN1">
    <property type="molecule type" value="protein"/>
</dbReference>
<dbReference type="Bgee" id="ENSG00000205277">
    <property type="expression patterns" value="Expressed in mucosa of sigmoid colon and 101 other cell types or tissues"/>
</dbReference>
<dbReference type="ExpressionAtlas" id="Q9UKN1">
    <property type="expression patterns" value="baseline and differential"/>
</dbReference>
<dbReference type="GO" id="GO:0005796">
    <property type="term" value="C:Golgi lumen"/>
    <property type="evidence" value="ECO:0000304"/>
    <property type="project" value="Reactome"/>
</dbReference>
<dbReference type="GO" id="GO:0005886">
    <property type="term" value="C:plasma membrane"/>
    <property type="evidence" value="ECO:0000304"/>
    <property type="project" value="Reactome"/>
</dbReference>
<dbReference type="GO" id="GO:0001558">
    <property type="term" value="P:regulation of cell growth"/>
    <property type="evidence" value="ECO:0000303"/>
    <property type="project" value="UniProtKB"/>
</dbReference>
<dbReference type="InterPro" id="IPR000742">
    <property type="entry name" value="EGF-like_dom"/>
</dbReference>
<dbReference type="InterPro" id="IPR052504">
    <property type="entry name" value="Mucin_signaling_protection"/>
</dbReference>
<dbReference type="InterPro" id="IPR000082">
    <property type="entry name" value="SEA_dom"/>
</dbReference>
<dbReference type="InterPro" id="IPR036364">
    <property type="entry name" value="SEA_dom_sf"/>
</dbReference>
<dbReference type="PANTHER" id="PTHR24041">
    <property type="entry name" value="MUCIN"/>
    <property type="match status" value="1"/>
</dbReference>
<dbReference type="PANTHER" id="PTHR24041:SF33">
    <property type="entry name" value="MUCIN-12"/>
    <property type="match status" value="1"/>
</dbReference>
<dbReference type="Pfam" id="PF01390">
    <property type="entry name" value="SEA"/>
    <property type="match status" value="1"/>
</dbReference>
<dbReference type="SUPFAM" id="SSF82671">
    <property type="entry name" value="SEA domain"/>
    <property type="match status" value="1"/>
</dbReference>
<dbReference type="PROSITE" id="PS00022">
    <property type="entry name" value="EGF_1"/>
    <property type="match status" value="1"/>
</dbReference>
<dbReference type="PROSITE" id="PS01186">
    <property type="entry name" value="EGF_2"/>
    <property type="match status" value="1"/>
</dbReference>
<dbReference type="PROSITE" id="PS50024">
    <property type="entry name" value="SEA"/>
    <property type="match status" value="1"/>
</dbReference>